<proteinExistence type="evidence at protein level"/>
<protein>
    <recommendedName>
        <fullName>Proline-rich protein 33</fullName>
    </recommendedName>
</protein>
<keyword id="KW-1267">Proteomics identification</keyword>
<keyword id="KW-1185">Reference proteome</keyword>
<evidence type="ECO:0000256" key="1">
    <source>
        <dbReference type="SAM" id="MobiDB-lite"/>
    </source>
</evidence>
<feature type="chain" id="PRO_0000331519" description="Proline-rich protein 33">
    <location>
        <begin position="1"/>
        <end position="331"/>
    </location>
</feature>
<feature type="region of interest" description="Disordered" evidence="1">
    <location>
        <begin position="1"/>
        <end position="112"/>
    </location>
</feature>
<feature type="region of interest" description="Disordered" evidence="1">
    <location>
        <begin position="128"/>
        <end position="185"/>
    </location>
</feature>
<feature type="region of interest" description="Disordered" evidence="1">
    <location>
        <begin position="204"/>
        <end position="247"/>
    </location>
</feature>
<feature type="compositionally biased region" description="Pro residues" evidence="1">
    <location>
        <begin position="94"/>
        <end position="105"/>
    </location>
</feature>
<feature type="compositionally biased region" description="Low complexity" evidence="1">
    <location>
        <begin position="149"/>
        <end position="169"/>
    </location>
</feature>
<feature type="compositionally biased region" description="Pro residues" evidence="1">
    <location>
        <begin position="170"/>
        <end position="185"/>
    </location>
</feature>
<feature type="compositionally biased region" description="Low complexity" evidence="1">
    <location>
        <begin position="217"/>
        <end position="238"/>
    </location>
</feature>
<gene>
    <name type="primary">PRR33</name>
    <name type="synonym">C11orf89</name>
</gene>
<dbReference type="EMBL" id="AC051649">
    <property type="status" value="NOT_ANNOTATED_CDS"/>
    <property type="molecule type" value="Genomic_DNA"/>
</dbReference>
<dbReference type="STRING" id="9606.ENSP00000491327"/>
<dbReference type="GlyGen" id="A8MZF0">
    <property type="glycosylation" value="2 sites"/>
</dbReference>
<dbReference type="BioMuta" id="HGNC:35118"/>
<dbReference type="jPOST" id="A8MZF0"/>
<dbReference type="MassIVE" id="A8MZF0"/>
<dbReference type="PaxDb" id="9606-ENSP00000375311"/>
<dbReference type="PeptideAtlas" id="A8MZF0"/>
<dbReference type="ProteomicsDB" id="2471"/>
<dbReference type="UCSC" id="uc057xux.1">
    <property type="organism name" value="human"/>
</dbReference>
<dbReference type="AGR" id="HGNC:35118"/>
<dbReference type="GeneCards" id="PRR33"/>
<dbReference type="HGNC" id="HGNC:35118">
    <property type="gene designation" value="PRR33"/>
</dbReference>
<dbReference type="neXtProt" id="NX_A8MZF0"/>
<dbReference type="eggNOG" id="ENOG502QPMN">
    <property type="taxonomic scope" value="Eukaryota"/>
</dbReference>
<dbReference type="HOGENOM" id="CLU_044995_0_0_1"/>
<dbReference type="InParanoid" id="A8MZF0"/>
<dbReference type="OrthoDB" id="329227at2759"/>
<dbReference type="PAN-GO" id="A8MZF0">
    <property type="GO annotations" value="0 GO annotations based on evolutionary models"/>
</dbReference>
<dbReference type="PhylomeDB" id="A8MZF0"/>
<dbReference type="TreeFam" id="TF337361"/>
<dbReference type="Pharos" id="A8MZF0">
    <property type="development level" value="Tdark"/>
</dbReference>
<dbReference type="PRO" id="PR:A8MZF0"/>
<dbReference type="Proteomes" id="UP000005640">
    <property type="component" value="Unplaced"/>
</dbReference>
<dbReference type="RNAct" id="A8MZF0">
    <property type="molecule type" value="protein"/>
</dbReference>
<dbReference type="InterPro" id="IPR028004">
    <property type="entry name" value="DUF4643"/>
</dbReference>
<dbReference type="PANTHER" id="PTHR38004">
    <property type="entry name" value="PROLINE-RICH PROTEIN 33"/>
    <property type="match status" value="1"/>
</dbReference>
<dbReference type="PANTHER" id="PTHR38004:SF1">
    <property type="entry name" value="PROLINE-RICH PROTEIN 33"/>
    <property type="match status" value="1"/>
</dbReference>
<dbReference type="Pfam" id="PF15485">
    <property type="entry name" value="DUF4643"/>
    <property type="match status" value="1"/>
</dbReference>
<sequence>MGPQVVASAPEPTRPPSGFVPVSGGGGTHVTQVHIQLAPSPHNGTPEPPRTAPEVGSNSQDGDATPSPPRAQPLVPVAHIRPLPTTVQAASPLPEEPPVPRPPPGFQASVPREASARVVVPIAPTCRSLESSPHSLVPMGPGREHLEEPPMAGPAAEAERVSSPAWASSPTPPSGPHPCPVPKVAPKPRLSGWTWLKKQLLEEAPEPPCPEPRQSLEPEVPTPTEQEVPAPTEQEVPALTAPRAPASRTSRMWDAVLYRMSVAEAQGRLAGPSGGEHTPASLTRLPFLYRPRFNARKLQEATRPPPTVRSILELSPQPKNFNRTATGWRLQ</sequence>
<name>PRR33_HUMAN</name>
<reference key="1">
    <citation type="journal article" date="2006" name="Nature">
        <title>Human chromosome 11 DNA sequence and analysis including novel gene identification.</title>
        <authorList>
            <person name="Taylor T.D."/>
            <person name="Noguchi H."/>
            <person name="Totoki Y."/>
            <person name="Toyoda A."/>
            <person name="Kuroki Y."/>
            <person name="Dewar K."/>
            <person name="Lloyd C."/>
            <person name="Itoh T."/>
            <person name="Takeda T."/>
            <person name="Kim D.-W."/>
            <person name="She X."/>
            <person name="Barlow K.F."/>
            <person name="Bloom T."/>
            <person name="Bruford E."/>
            <person name="Chang J.L."/>
            <person name="Cuomo C.A."/>
            <person name="Eichler E."/>
            <person name="FitzGerald M.G."/>
            <person name="Jaffe D.B."/>
            <person name="LaButti K."/>
            <person name="Nicol R."/>
            <person name="Park H.-S."/>
            <person name="Seaman C."/>
            <person name="Sougnez C."/>
            <person name="Yang X."/>
            <person name="Zimmer A.R."/>
            <person name="Zody M.C."/>
            <person name="Birren B.W."/>
            <person name="Nusbaum C."/>
            <person name="Fujiyama A."/>
            <person name="Hattori M."/>
            <person name="Rogers J."/>
            <person name="Lander E.S."/>
            <person name="Sakaki Y."/>
        </authorList>
    </citation>
    <scope>NUCLEOTIDE SEQUENCE [LARGE SCALE GENOMIC DNA]</scope>
</reference>
<organism>
    <name type="scientific">Homo sapiens</name>
    <name type="common">Human</name>
    <dbReference type="NCBI Taxonomy" id="9606"/>
    <lineage>
        <taxon>Eukaryota</taxon>
        <taxon>Metazoa</taxon>
        <taxon>Chordata</taxon>
        <taxon>Craniata</taxon>
        <taxon>Vertebrata</taxon>
        <taxon>Euteleostomi</taxon>
        <taxon>Mammalia</taxon>
        <taxon>Eutheria</taxon>
        <taxon>Euarchontoglires</taxon>
        <taxon>Primates</taxon>
        <taxon>Haplorrhini</taxon>
        <taxon>Catarrhini</taxon>
        <taxon>Hominidae</taxon>
        <taxon>Homo</taxon>
    </lineage>
</organism>
<accession>A8MZF0</accession>
<accession>A6NI49</accession>